<keyword id="KW-0520">NAD</keyword>
<keyword id="KW-0560">Oxidoreductase</keyword>
<keyword id="KW-1185">Reference proteome</keyword>
<reference key="1">
    <citation type="journal article" date="1996" name="DNA Res.">
        <title>A 570-kb DNA sequence of the Escherichia coli K-12 genome corresponding to the 28.0-40.1 min region on the linkage map.</title>
        <authorList>
            <person name="Aiba H."/>
            <person name="Baba T."/>
            <person name="Fujita K."/>
            <person name="Hayashi K."/>
            <person name="Inada T."/>
            <person name="Isono K."/>
            <person name="Itoh T."/>
            <person name="Kasai H."/>
            <person name="Kashimoto K."/>
            <person name="Kimura S."/>
            <person name="Kitakawa M."/>
            <person name="Kitagawa M."/>
            <person name="Makino K."/>
            <person name="Miki T."/>
            <person name="Mizobuchi K."/>
            <person name="Mori H."/>
            <person name="Mori T."/>
            <person name="Motomura K."/>
            <person name="Nakade S."/>
            <person name="Nakamura Y."/>
            <person name="Nashimoto H."/>
            <person name="Nishio Y."/>
            <person name="Oshima T."/>
            <person name="Saito N."/>
            <person name="Sampei G."/>
            <person name="Seki Y."/>
            <person name="Sivasundaram S."/>
            <person name="Tagami H."/>
            <person name="Takeda J."/>
            <person name="Takemoto K."/>
            <person name="Takeuchi Y."/>
            <person name="Wada C."/>
            <person name="Yamamoto Y."/>
            <person name="Horiuchi T."/>
        </authorList>
    </citation>
    <scope>NUCLEOTIDE SEQUENCE [LARGE SCALE GENOMIC DNA]</scope>
    <source>
        <strain>K12 / W3110 / ATCC 27325 / DSM 5911</strain>
    </source>
</reference>
<reference key="2">
    <citation type="journal article" date="1997" name="Science">
        <title>The complete genome sequence of Escherichia coli K-12.</title>
        <authorList>
            <person name="Blattner F.R."/>
            <person name="Plunkett G. III"/>
            <person name="Bloch C.A."/>
            <person name="Perna N.T."/>
            <person name="Burland V."/>
            <person name="Riley M."/>
            <person name="Collado-Vides J."/>
            <person name="Glasner J.D."/>
            <person name="Rode C.K."/>
            <person name="Mayhew G.F."/>
            <person name="Gregor J."/>
            <person name="Davis N.W."/>
            <person name="Kirkpatrick H.A."/>
            <person name="Goeden M.A."/>
            <person name="Rose D.J."/>
            <person name="Mau B."/>
            <person name="Shao Y."/>
        </authorList>
    </citation>
    <scope>NUCLEOTIDE SEQUENCE [LARGE SCALE GENOMIC DNA]</scope>
    <source>
        <strain>K12 / MG1655 / ATCC 47076</strain>
    </source>
</reference>
<reference key="3">
    <citation type="journal article" date="2006" name="Mol. Syst. Biol.">
        <title>Highly accurate genome sequences of Escherichia coli K-12 strains MG1655 and W3110.</title>
        <authorList>
            <person name="Hayashi K."/>
            <person name="Morooka N."/>
            <person name="Yamamoto Y."/>
            <person name="Fujita K."/>
            <person name="Isono K."/>
            <person name="Choi S."/>
            <person name="Ohtsubo E."/>
            <person name="Baba T."/>
            <person name="Wanner B.L."/>
            <person name="Mori H."/>
            <person name="Horiuchi T."/>
        </authorList>
    </citation>
    <scope>NUCLEOTIDE SEQUENCE [LARGE SCALE GENOMIC DNA]</scope>
    <source>
        <strain>K12 / W3110 / ATCC 27325 / DSM 5911</strain>
    </source>
</reference>
<feature type="chain" id="PRO_0000170748" description="Uncharacterized oxidoreductase YdfI">
    <location>
        <begin position="1"/>
        <end position="486"/>
    </location>
</feature>
<feature type="binding site" evidence="1">
    <location>
        <begin position="24"/>
        <end position="35"/>
    </location>
    <ligand>
        <name>NAD(+)</name>
        <dbReference type="ChEBI" id="CHEBI:57540"/>
    </ligand>
</feature>
<organism>
    <name type="scientific">Escherichia coli (strain K12)</name>
    <dbReference type="NCBI Taxonomy" id="83333"/>
    <lineage>
        <taxon>Bacteria</taxon>
        <taxon>Pseudomonadati</taxon>
        <taxon>Pseudomonadota</taxon>
        <taxon>Gammaproteobacteria</taxon>
        <taxon>Enterobacterales</taxon>
        <taxon>Enterobacteriaceae</taxon>
        <taxon>Escherichia</taxon>
    </lineage>
</organism>
<proteinExistence type="inferred from homology"/>
<comment type="similarity">
    <text evidence="2">Belongs to the mannitol dehydrogenase family. UxuB subfamily.</text>
</comment>
<sequence length="486" mass="53685">MGNNLLSAKATLPVYDLNNLAPRIVHLGFGAFHRAHQGVYADILATEHFSDWGYYEVNLIGGEQQIADLQQQDNLYTVAEMSADVWTARVVGVVKKALHVQIDGLETVLAAMCEPQIAIVSLTITEKGYFHSPATGQLMLDHPMVAADVQNPHQPKTATGVIVEALARRKAAGLPAFTVMSCDNMPENGHVMRDVVTSYAQAVDVKLAQWIEDNVTFPSTMVDRIVPAVTEDTLAKIEQLTGVRDPAGVACEPFRQWVIEDNFVAGRPEWEKAGAELVSDVLPYEEMKLRMLNGSHSFLAYLGYLAGYQHINDCMEDEHYRYAAYGLMLQEQAPTLKVQGVDLQDYANRLIARYSNPALRHRTWQIAMDGSQKLPQRMLDSVRWHLAHDSKFDLLALGVAGWMRYVGGVDEQGNPIEISDPLLPVIQKAVQSSAEGKARVQSLLAIKAIFGDDLPDNSLFTARVTETYLSLLAHGAKATVAKYSVK</sequence>
<gene>
    <name type="primary">ydfI</name>
    <name type="ordered locus">b1542</name>
    <name type="ordered locus">JW1535</name>
</gene>
<name>YDFI_ECOLI</name>
<dbReference type="EC" id="1.-.-.-"/>
<dbReference type="EMBL" id="U00096">
    <property type="protein sequence ID" value="AAC74615.1"/>
    <property type="molecule type" value="Genomic_DNA"/>
</dbReference>
<dbReference type="EMBL" id="AP009048">
    <property type="protein sequence ID" value="BAA15243.1"/>
    <property type="molecule type" value="Genomic_DNA"/>
</dbReference>
<dbReference type="PIR" id="A64909">
    <property type="entry name" value="A64909"/>
</dbReference>
<dbReference type="RefSeq" id="NP_416060.1">
    <property type="nucleotide sequence ID" value="NC_000913.3"/>
</dbReference>
<dbReference type="RefSeq" id="WP_000527743.1">
    <property type="nucleotide sequence ID" value="NZ_LN832404.1"/>
</dbReference>
<dbReference type="SMR" id="P77260"/>
<dbReference type="BioGRID" id="4260873">
    <property type="interactions" value="12"/>
</dbReference>
<dbReference type="FunCoup" id="P77260">
    <property type="interactions" value="70"/>
</dbReference>
<dbReference type="IntAct" id="P77260">
    <property type="interactions" value="4"/>
</dbReference>
<dbReference type="STRING" id="511145.b1542"/>
<dbReference type="jPOST" id="P77260"/>
<dbReference type="PaxDb" id="511145-b1542"/>
<dbReference type="EnsemblBacteria" id="AAC74615">
    <property type="protein sequence ID" value="AAC74615"/>
    <property type="gene ID" value="b1542"/>
</dbReference>
<dbReference type="GeneID" id="945861"/>
<dbReference type="KEGG" id="ecj:JW1535"/>
<dbReference type="KEGG" id="eco:b1542"/>
<dbReference type="KEGG" id="ecoc:C3026_08905"/>
<dbReference type="PATRIC" id="fig|1411691.4.peg.723"/>
<dbReference type="EchoBASE" id="EB3582"/>
<dbReference type="eggNOG" id="COG0246">
    <property type="taxonomic scope" value="Bacteria"/>
</dbReference>
<dbReference type="HOGENOM" id="CLU_027324_0_1_6"/>
<dbReference type="InParanoid" id="P77260"/>
<dbReference type="OMA" id="WGICGVA"/>
<dbReference type="OrthoDB" id="271711at2"/>
<dbReference type="PhylomeDB" id="P77260"/>
<dbReference type="BioCyc" id="EcoCyc:G6816-MONOMER"/>
<dbReference type="PRO" id="PR:P77260"/>
<dbReference type="Proteomes" id="UP000000625">
    <property type="component" value="Chromosome"/>
</dbReference>
<dbReference type="GO" id="GO:0016616">
    <property type="term" value="F:oxidoreductase activity, acting on the CH-OH group of donors, NAD or NADP as acceptor"/>
    <property type="evidence" value="ECO:0000318"/>
    <property type="project" value="GO_Central"/>
</dbReference>
<dbReference type="GO" id="GO:0019594">
    <property type="term" value="P:mannitol metabolic process"/>
    <property type="evidence" value="ECO:0007669"/>
    <property type="project" value="InterPro"/>
</dbReference>
<dbReference type="FunFam" id="3.40.50.720:FF:000129">
    <property type="entry name" value="D-mannonate oxidoreductase"/>
    <property type="match status" value="1"/>
</dbReference>
<dbReference type="Gene3D" id="1.10.1040.10">
    <property type="entry name" value="N-(1-d-carboxylethyl)-l-norvaline Dehydrogenase, domain 2"/>
    <property type="match status" value="1"/>
</dbReference>
<dbReference type="Gene3D" id="3.40.50.720">
    <property type="entry name" value="NAD(P)-binding Rossmann-like Domain"/>
    <property type="match status" value="1"/>
</dbReference>
<dbReference type="InterPro" id="IPR008927">
    <property type="entry name" value="6-PGluconate_DH-like_C_sf"/>
</dbReference>
<dbReference type="InterPro" id="IPR013328">
    <property type="entry name" value="6PGD_dom2"/>
</dbReference>
<dbReference type="InterPro" id="IPR000669">
    <property type="entry name" value="Mannitol_DH"/>
</dbReference>
<dbReference type="InterPro" id="IPR050988">
    <property type="entry name" value="Mannitol_DH/Oxidoreductase"/>
</dbReference>
<dbReference type="InterPro" id="IPR013118">
    <property type="entry name" value="Mannitol_DH_C"/>
</dbReference>
<dbReference type="InterPro" id="IPR023027">
    <property type="entry name" value="Mannitol_DH_CS"/>
</dbReference>
<dbReference type="InterPro" id="IPR013131">
    <property type="entry name" value="Mannitol_DH_N"/>
</dbReference>
<dbReference type="InterPro" id="IPR036291">
    <property type="entry name" value="NAD(P)-bd_dom_sf"/>
</dbReference>
<dbReference type="NCBIfam" id="NF011611">
    <property type="entry name" value="PRK15037.1"/>
    <property type="match status" value="1"/>
</dbReference>
<dbReference type="PANTHER" id="PTHR43362:SF4">
    <property type="entry name" value="MANNITOL DEHYDROGENASE"/>
    <property type="match status" value="1"/>
</dbReference>
<dbReference type="PANTHER" id="PTHR43362">
    <property type="entry name" value="MANNITOL DEHYDROGENASE DSF1-RELATED"/>
    <property type="match status" value="1"/>
</dbReference>
<dbReference type="Pfam" id="PF01232">
    <property type="entry name" value="Mannitol_dh"/>
    <property type="match status" value="1"/>
</dbReference>
<dbReference type="Pfam" id="PF08125">
    <property type="entry name" value="Mannitol_dh_C"/>
    <property type="match status" value="1"/>
</dbReference>
<dbReference type="PRINTS" id="PR00084">
    <property type="entry name" value="MTLDHDRGNASE"/>
</dbReference>
<dbReference type="SUPFAM" id="SSF48179">
    <property type="entry name" value="6-phosphogluconate dehydrogenase C-terminal domain-like"/>
    <property type="match status" value="1"/>
</dbReference>
<dbReference type="SUPFAM" id="SSF51735">
    <property type="entry name" value="NAD(P)-binding Rossmann-fold domains"/>
    <property type="match status" value="1"/>
</dbReference>
<dbReference type="PROSITE" id="PS00974">
    <property type="entry name" value="MANNITOL_DHGENASE"/>
    <property type="match status" value="1"/>
</dbReference>
<evidence type="ECO:0000250" key="1"/>
<evidence type="ECO:0000305" key="2"/>
<accession>P77260</accession>
<protein>
    <recommendedName>
        <fullName>Uncharacterized oxidoreductase YdfI</fullName>
        <ecNumber>1.-.-.-</ecNumber>
    </recommendedName>
</protein>